<comment type="function">
    <text evidence="1">IGPS catalyzes the conversion of PRFAR and glutamine to IGP, AICAR and glutamate. The HisF subunit catalyzes the cyclization activity that produces IGP and AICAR from PRFAR using the ammonia provided by the HisH subunit.</text>
</comment>
<comment type="catalytic activity">
    <reaction evidence="1">
        <text>5-[(5-phospho-1-deoxy-D-ribulos-1-ylimino)methylamino]-1-(5-phospho-beta-D-ribosyl)imidazole-4-carboxamide + L-glutamine = D-erythro-1-(imidazol-4-yl)glycerol 3-phosphate + 5-amino-1-(5-phospho-beta-D-ribosyl)imidazole-4-carboxamide + L-glutamate + H(+)</text>
        <dbReference type="Rhea" id="RHEA:24793"/>
        <dbReference type="ChEBI" id="CHEBI:15378"/>
        <dbReference type="ChEBI" id="CHEBI:29985"/>
        <dbReference type="ChEBI" id="CHEBI:58278"/>
        <dbReference type="ChEBI" id="CHEBI:58359"/>
        <dbReference type="ChEBI" id="CHEBI:58475"/>
        <dbReference type="ChEBI" id="CHEBI:58525"/>
        <dbReference type="EC" id="4.3.2.10"/>
    </reaction>
</comment>
<comment type="pathway">
    <text evidence="1">Amino-acid biosynthesis; L-histidine biosynthesis; L-histidine from 5-phospho-alpha-D-ribose 1-diphosphate: step 5/9.</text>
</comment>
<comment type="subunit">
    <text evidence="1">Heterodimer of HisH and HisF.</text>
</comment>
<comment type="subcellular location">
    <subcellularLocation>
        <location evidence="1">Cytoplasm</location>
    </subcellularLocation>
</comment>
<comment type="similarity">
    <text evidence="1">Belongs to the HisA/HisF family.</text>
</comment>
<accession>Q3JN02</accession>
<gene>
    <name evidence="1" type="primary">hisF</name>
    <name type="ordered locus">BURPS1710b_3687</name>
</gene>
<keyword id="KW-0028">Amino-acid biosynthesis</keyword>
<keyword id="KW-0963">Cytoplasm</keyword>
<keyword id="KW-0368">Histidine biosynthesis</keyword>
<keyword id="KW-0456">Lyase</keyword>
<feature type="chain" id="PRO_0000230123" description="Imidazole glycerol phosphate synthase subunit HisF">
    <location>
        <begin position="1"/>
        <end position="257"/>
    </location>
</feature>
<feature type="active site" evidence="1">
    <location>
        <position position="12"/>
    </location>
</feature>
<feature type="active site" evidence="1">
    <location>
        <position position="131"/>
    </location>
</feature>
<protein>
    <recommendedName>
        <fullName evidence="1">Imidazole glycerol phosphate synthase subunit HisF</fullName>
        <ecNumber evidence="1">4.3.2.10</ecNumber>
    </recommendedName>
    <alternativeName>
        <fullName evidence="1">IGP synthase cyclase subunit</fullName>
    </alternativeName>
    <alternativeName>
        <fullName evidence="1">IGP synthase subunit HisF</fullName>
    </alternativeName>
    <alternativeName>
        <fullName evidence="1">ImGP synthase subunit HisF</fullName>
        <shortName evidence="1">IGPS subunit HisF</shortName>
    </alternativeName>
</protein>
<evidence type="ECO:0000255" key="1">
    <source>
        <dbReference type="HAMAP-Rule" id="MF_01013"/>
    </source>
</evidence>
<name>HIS6_BURP1</name>
<dbReference type="EC" id="4.3.2.10" evidence="1"/>
<dbReference type="EMBL" id="CP000124">
    <property type="protein sequence ID" value="ABA49162.1"/>
    <property type="molecule type" value="Genomic_DNA"/>
</dbReference>
<dbReference type="RefSeq" id="WP_004550994.1">
    <property type="nucleotide sequence ID" value="NC_007434.1"/>
</dbReference>
<dbReference type="SMR" id="Q3JN02"/>
<dbReference type="EnsemblBacteria" id="ABA49162">
    <property type="protein sequence ID" value="ABA49162"/>
    <property type="gene ID" value="BURPS1710b_3687"/>
</dbReference>
<dbReference type="GeneID" id="93061750"/>
<dbReference type="KEGG" id="bpm:BURPS1710b_3687"/>
<dbReference type="HOGENOM" id="CLU_048577_4_0_4"/>
<dbReference type="UniPathway" id="UPA00031">
    <property type="reaction ID" value="UER00010"/>
</dbReference>
<dbReference type="Proteomes" id="UP000002700">
    <property type="component" value="Chromosome I"/>
</dbReference>
<dbReference type="GO" id="GO:0005737">
    <property type="term" value="C:cytoplasm"/>
    <property type="evidence" value="ECO:0007669"/>
    <property type="project" value="UniProtKB-SubCell"/>
</dbReference>
<dbReference type="GO" id="GO:0000107">
    <property type="term" value="F:imidazoleglycerol-phosphate synthase activity"/>
    <property type="evidence" value="ECO:0007669"/>
    <property type="project" value="UniProtKB-UniRule"/>
</dbReference>
<dbReference type="GO" id="GO:0016829">
    <property type="term" value="F:lyase activity"/>
    <property type="evidence" value="ECO:0007669"/>
    <property type="project" value="UniProtKB-KW"/>
</dbReference>
<dbReference type="GO" id="GO:0000105">
    <property type="term" value="P:L-histidine biosynthetic process"/>
    <property type="evidence" value="ECO:0007669"/>
    <property type="project" value="UniProtKB-UniRule"/>
</dbReference>
<dbReference type="CDD" id="cd04731">
    <property type="entry name" value="HisF"/>
    <property type="match status" value="1"/>
</dbReference>
<dbReference type="FunFam" id="3.20.20.70:FF:000006">
    <property type="entry name" value="Imidazole glycerol phosphate synthase subunit HisF"/>
    <property type="match status" value="1"/>
</dbReference>
<dbReference type="Gene3D" id="3.20.20.70">
    <property type="entry name" value="Aldolase class I"/>
    <property type="match status" value="1"/>
</dbReference>
<dbReference type="HAMAP" id="MF_01013">
    <property type="entry name" value="HisF"/>
    <property type="match status" value="1"/>
</dbReference>
<dbReference type="InterPro" id="IPR013785">
    <property type="entry name" value="Aldolase_TIM"/>
</dbReference>
<dbReference type="InterPro" id="IPR006062">
    <property type="entry name" value="His_biosynth"/>
</dbReference>
<dbReference type="InterPro" id="IPR004651">
    <property type="entry name" value="HisF"/>
</dbReference>
<dbReference type="InterPro" id="IPR050064">
    <property type="entry name" value="IGPS_HisA/HisF"/>
</dbReference>
<dbReference type="InterPro" id="IPR011060">
    <property type="entry name" value="RibuloseP-bd_barrel"/>
</dbReference>
<dbReference type="NCBIfam" id="TIGR00735">
    <property type="entry name" value="hisF"/>
    <property type="match status" value="1"/>
</dbReference>
<dbReference type="PANTHER" id="PTHR21235:SF2">
    <property type="entry name" value="IMIDAZOLE GLYCEROL PHOSPHATE SYNTHASE HISHF"/>
    <property type="match status" value="1"/>
</dbReference>
<dbReference type="PANTHER" id="PTHR21235">
    <property type="entry name" value="IMIDAZOLE GLYCEROL PHOSPHATE SYNTHASE SUBUNIT HISF/H IGP SYNTHASE SUBUNIT HISF/H"/>
    <property type="match status" value="1"/>
</dbReference>
<dbReference type="Pfam" id="PF00977">
    <property type="entry name" value="His_biosynth"/>
    <property type="match status" value="1"/>
</dbReference>
<dbReference type="SUPFAM" id="SSF51366">
    <property type="entry name" value="Ribulose-phoshate binding barrel"/>
    <property type="match status" value="1"/>
</dbReference>
<reference key="1">
    <citation type="journal article" date="2010" name="Genome Biol. Evol.">
        <title>Continuing evolution of Burkholderia mallei through genome reduction and large-scale rearrangements.</title>
        <authorList>
            <person name="Losada L."/>
            <person name="Ronning C.M."/>
            <person name="DeShazer D."/>
            <person name="Woods D."/>
            <person name="Fedorova N."/>
            <person name="Kim H.S."/>
            <person name="Shabalina S.A."/>
            <person name="Pearson T.R."/>
            <person name="Brinkac L."/>
            <person name="Tan P."/>
            <person name="Nandi T."/>
            <person name="Crabtree J."/>
            <person name="Badger J."/>
            <person name="Beckstrom-Sternberg S."/>
            <person name="Saqib M."/>
            <person name="Schutzer S.E."/>
            <person name="Keim P."/>
            <person name="Nierman W.C."/>
        </authorList>
    </citation>
    <scope>NUCLEOTIDE SEQUENCE [LARGE SCALE GENOMIC DNA]</scope>
    <source>
        <strain>1710b</strain>
    </source>
</reference>
<proteinExistence type="inferred from homology"/>
<organism>
    <name type="scientific">Burkholderia pseudomallei (strain 1710b)</name>
    <dbReference type="NCBI Taxonomy" id="320372"/>
    <lineage>
        <taxon>Bacteria</taxon>
        <taxon>Pseudomonadati</taxon>
        <taxon>Pseudomonadota</taxon>
        <taxon>Betaproteobacteria</taxon>
        <taxon>Burkholderiales</taxon>
        <taxon>Burkholderiaceae</taxon>
        <taxon>Burkholderia</taxon>
        <taxon>pseudomallei group</taxon>
    </lineage>
</organism>
<sequence length="257" mass="26979">MALAKRIIPCLDVTAGRVVKGVNFVELRDAGDPVEIARRYDAQGADELTFLDITATSDGRDLILPIIEAVASQVFIPLTVGGGVRAVEDVRRLLNAGADKVSMNSSAVANPPLVRDAADKYGSQCIVVAIDAKRVSADGEPPRWEVFTHGGRKGTGLDAVEWARKMAELGAGEILLTSMDRDGTKAGFDLALTRAVSDAVPVPVIASGGVGSLEHLAAGITEGHADAVLAASIFHYGEHTVGEAKRFMAERGIAVRL</sequence>